<protein>
    <recommendedName>
        <fullName evidence="1">Ribosomal RNA small subunit methyltransferase J</fullName>
        <ecNumber evidence="1">2.1.1.242</ecNumber>
    </recommendedName>
    <alternativeName>
        <fullName evidence="1">16S rRNA m2G1516 methyltransferase</fullName>
    </alternativeName>
    <alternativeName>
        <fullName evidence="1">rRNA (guanine-N(2)-)-methyltransferase</fullName>
    </alternativeName>
</protein>
<evidence type="ECO:0000255" key="1">
    <source>
        <dbReference type="HAMAP-Rule" id="MF_01523"/>
    </source>
</evidence>
<feature type="chain" id="PRO_0000244284" description="Ribosomal RNA small subunit methyltransferase J">
    <location>
        <begin position="1"/>
        <end position="250"/>
    </location>
</feature>
<feature type="binding site" evidence="1">
    <location>
        <begin position="101"/>
        <end position="102"/>
    </location>
    <ligand>
        <name>S-adenosyl-L-methionine</name>
        <dbReference type="ChEBI" id="CHEBI:59789"/>
    </ligand>
</feature>
<feature type="binding site" evidence="1">
    <location>
        <begin position="117"/>
        <end position="118"/>
    </location>
    <ligand>
        <name>S-adenosyl-L-methionine</name>
        <dbReference type="ChEBI" id="CHEBI:59789"/>
    </ligand>
</feature>
<feature type="binding site" evidence="1">
    <location>
        <begin position="153"/>
        <end position="154"/>
    </location>
    <ligand>
        <name>S-adenosyl-L-methionine</name>
        <dbReference type="ChEBI" id="CHEBI:59789"/>
    </ligand>
</feature>
<feature type="binding site" evidence="1">
    <location>
        <position position="171"/>
    </location>
    <ligand>
        <name>S-adenosyl-L-methionine</name>
        <dbReference type="ChEBI" id="CHEBI:59789"/>
    </ligand>
</feature>
<dbReference type="EC" id="2.1.1.242" evidence="1"/>
<dbReference type="EMBL" id="CP000034">
    <property type="protein sequence ID" value="ABB63539.1"/>
    <property type="molecule type" value="Genomic_DNA"/>
</dbReference>
<dbReference type="RefSeq" id="WP_001165120.1">
    <property type="nucleotide sequence ID" value="NC_007606.1"/>
</dbReference>
<dbReference type="RefSeq" id="YP_405030.1">
    <property type="nucleotide sequence ID" value="NC_007606.1"/>
</dbReference>
<dbReference type="SMR" id="Q32AW6"/>
<dbReference type="STRING" id="300267.SDY_3565"/>
<dbReference type="EnsemblBacteria" id="ABB63539">
    <property type="protein sequence ID" value="ABB63539"/>
    <property type="gene ID" value="SDY_3565"/>
</dbReference>
<dbReference type="KEGG" id="sdy:SDY_3565"/>
<dbReference type="PATRIC" id="fig|300267.13.peg.4232"/>
<dbReference type="HOGENOM" id="CLU_076324_0_0_6"/>
<dbReference type="Proteomes" id="UP000002716">
    <property type="component" value="Chromosome"/>
</dbReference>
<dbReference type="GO" id="GO:0005737">
    <property type="term" value="C:cytoplasm"/>
    <property type="evidence" value="ECO:0007669"/>
    <property type="project" value="UniProtKB-SubCell"/>
</dbReference>
<dbReference type="GO" id="GO:0008990">
    <property type="term" value="F:rRNA (guanine-N2-)-methyltransferase activity"/>
    <property type="evidence" value="ECO:0007669"/>
    <property type="project" value="UniProtKB-UniRule"/>
</dbReference>
<dbReference type="CDD" id="cd02440">
    <property type="entry name" value="AdoMet_MTases"/>
    <property type="match status" value="1"/>
</dbReference>
<dbReference type="FunFam" id="3.40.50.150:FF:000072">
    <property type="entry name" value="Ribosomal RNA small subunit methyltransferase J"/>
    <property type="match status" value="1"/>
</dbReference>
<dbReference type="Gene3D" id="3.40.50.150">
    <property type="entry name" value="Vaccinia Virus protein VP39"/>
    <property type="match status" value="1"/>
</dbReference>
<dbReference type="Gene3D" id="3.40.1630.10">
    <property type="entry name" value="YhiQ-like domain"/>
    <property type="match status" value="1"/>
</dbReference>
<dbReference type="HAMAP" id="MF_01523">
    <property type="entry name" value="16SrRNA_methyltr_J"/>
    <property type="match status" value="1"/>
</dbReference>
<dbReference type="InterPro" id="IPR007536">
    <property type="entry name" value="16SrRNA_methylTrfase_J"/>
</dbReference>
<dbReference type="InterPro" id="IPR029063">
    <property type="entry name" value="SAM-dependent_MTases_sf"/>
</dbReference>
<dbReference type="NCBIfam" id="NF008012">
    <property type="entry name" value="PRK10742.1"/>
    <property type="match status" value="1"/>
</dbReference>
<dbReference type="PANTHER" id="PTHR36112">
    <property type="entry name" value="RIBOSOMAL RNA SMALL SUBUNIT METHYLTRANSFERASE J"/>
    <property type="match status" value="1"/>
</dbReference>
<dbReference type="PANTHER" id="PTHR36112:SF1">
    <property type="entry name" value="RIBOSOMAL RNA SMALL SUBUNIT METHYLTRANSFERASE J"/>
    <property type="match status" value="1"/>
</dbReference>
<dbReference type="Pfam" id="PF04445">
    <property type="entry name" value="SAM_MT"/>
    <property type="match status" value="1"/>
</dbReference>
<dbReference type="SUPFAM" id="SSF53335">
    <property type="entry name" value="S-adenosyl-L-methionine-dependent methyltransferases"/>
    <property type="match status" value="1"/>
</dbReference>
<sequence>MQICLIDETGTGDGALSVLATRWGLEHDEDNLMALVLTPEHLELRKRDEPKLGGIFVDFVGGAMAHRRKFGGGRGEAVAKAVGIKGDYLPDVVDATAGLGRDAFVLASVGCRVRMLERNPVVAALLDDGLARGYADAEIGGWLQERLQLIHASSLTALTDITPRPQVVYLDPMFPHKQKSALVKKEMRVFQSLVGPDLDADGLLEPARLLASKRVVVKRPDYAPPLANVATPNAVVTKGHRFDIYAGTPV</sequence>
<name>RSMJ_SHIDS</name>
<accession>Q32AW6</accession>
<proteinExistence type="inferred from homology"/>
<keyword id="KW-0963">Cytoplasm</keyword>
<keyword id="KW-0489">Methyltransferase</keyword>
<keyword id="KW-1185">Reference proteome</keyword>
<keyword id="KW-0698">rRNA processing</keyword>
<keyword id="KW-0949">S-adenosyl-L-methionine</keyword>
<keyword id="KW-0808">Transferase</keyword>
<comment type="function">
    <text evidence="1">Specifically methylates the guanosine in position 1516 of 16S rRNA.</text>
</comment>
<comment type="catalytic activity">
    <reaction evidence="1">
        <text>guanosine(1516) in 16S rRNA + S-adenosyl-L-methionine = N(2)-methylguanosine(1516) in 16S rRNA + S-adenosyl-L-homocysteine + H(+)</text>
        <dbReference type="Rhea" id="RHEA:43220"/>
        <dbReference type="Rhea" id="RHEA-COMP:10412"/>
        <dbReference type="Rhea" id="RHEA-COMP:10413"/>
        <dbReference type="ChEBI" id="CHEBI:15378"/>
        <dbReference type="ChEBI" id="CHEBI:57856"/>
        <dbReference type="ChEBI" id="CHEBI:59789"/>
        <dbReference type="ChEBI" id="CHEBI:74269"/>
        <dbReference type="ChEBI" id="CHEBI:74481"/>
        <dbReference type="EC" id="2.1.1.242"/>
    </reaction>
</comment>
<comment type="subcellular location">
    <subcellularLocation>
        <location evidence="1">Cytoplasm</location>
    </subcellularLocation>
</comment>
<comment type="similarity">
    <text evidence="1">Belongs to the methyltransferase superfamily. RsmJ family.</text>
</comment>
<organism>
    <name type="scientific">Shigella dysenteriae serotype 1 (strain Sd197)</name>
    <dbReference type="NCBI Taxonomy" id="300267"/>
    <lineage>
        <taxon>Bacteria</taxon>
        <taxon>Pseudomonadati</taxon>
        <taxon>Pseudomonadota</taxon>
        <taxon>Gammaproteobacteria</taxon>
        <taxon>Enterobacterales</taxon>
        <taxon>Enterobacteriaceae</taxon>
        <taxon>Shigella</taxon>
    </lineage>
</organism>
<gene>
    <name evidence="1" type="primary">rsmJ</name>
    <name type="synonym">yhiQ</name>
    <name type="ordered locus">SDY_3565</name>
</gene>
<reference key="1">
    <citation type="journal article" date="2005" name="Nucleic Acids Res.">
        <title>Genome dynamics and diversity of Shigella species, the etiologic agents of bacillary dysentery.</title>
        <authorList>
            <person name="Yang F."/>
            <person name="Yang J."/>
            <person name="Zhang X."/>
            <person name="Chen L."/>
            <person name="Jiang Y."/>
            <person name="Yan Y."/>
            <person name="Tang X."/>
            <person name="Wang J."/>
            <person name="Xiong Z."/>
            <person name="Dong J."/>
            <person name="Xue Y."/>
            <person name="Zhu Y."/>
            <person name="Xu X."/>
            <person name="Sun L."/>
            <person name="Chen S."/>
            <person name="Nie H."/>
            <person name="Peng J."/>
            <person name="Xu J."/>
            <person name="Wang Y."/>
            <person name="Yuan Z."/>
            <person name="Wen Y."/>
            <person name="Yao Z."/>
            <person name="Shen Y."/>
            <person name="Qiang B."/>
            <person name="Hou Y."/>
            <person name="Yu J."/>
            <person name="Jin Q."/>
        </authorList>
    </citation>
    <scope>NUCLEOTIDE SEQUENCE [LARGE SCALE GENOMIC DNA]</scope>
    <source>
        <strain>Sd197</strain>
    </source>
</reference>